<sequence>MSEPQPRGAERDLYRDTWVRYLGYANEVGEAFRSLVPAAVVWLSYGVASSYVLADAIDKGKKAGEVPSPEAGRSARVTVAVVDTFVWQALASVAIPGFTINRVCAASLYVLGTATRWPLAVRKWTTTALGLLTIPIIIHPIDRSVDFLLDSSLRKLYPTVGKPSSS</sequence>
<feature type="chain" id="PRO_0000212411" description="Mitochondrial fission process protein 1">
    <location>
        <begin position="1"/>
        <end position="166"/>
    </location>
</feature>
<feature type="transmembrane region" description="Helical" evidence="2">
    <location>
        <begin position="34"/>
        <end position="54"/>
    </location>
</feature>
<feature type="transmembrane region" description="Helical" evidence="2">
    <location>
        <begin position="80"/>
        <end position="100"/>
    </location>
</feature>
<feature type="transmembrane region" description="Helical" evidence="2">
    <location>
        <begin position="129"/>
        <end position="149"/>
    </location>
</feature>
<feature type="modified residue" description="N6-succinyllysine" evidence="1">
    <location>
        <position position="123"/>
    </location>
</feature>
<feature type="splice variant" id="VSP_041425" description="In isoform 2." evidence="5">
    <original>PSPEAGRSARVTVAVVDTFVWQALASVAIPGFTINRVCAASLYVLGTATRWPLAVRKWTTTALGLLTIPIIIHPIDRSVDFLLDSSLRKLYPTVGKPSSS</original>
    <variation>GGFPPGLQPAQALPNSGEAQLLLIILWYLACASASCFMSTSYSCQGMWTPGSLVSKDPGTWVGLSWTEA</variation>
    <location>
        <begin position="67"/>
        <end position="166"/>
    </location>
</feature>
<feature type="sequence conflict" description="In Ref. 2; AAG43136." evidence="5" ref="2">
    <original>S</original>
    <variation>A</variation>
    <location>
        <position position="92"/>
    </location>
</feature>
<evidence type="ECO:0000250" key="1">
    <source>
        <dbReference type="UniProtKB" id="Q9CRB8"/>
    </source>
</evidence>
<evidence type="ECO:0000255" key="2"/>
<evidence type="ECO:0000269" key="3">
    <source>
    </source>
</evidence>
<evidence type="ECO:0000269" key="4">
    <source>
    </source>
</evidence>
<evidence type="ECO:0000305" key="5"/>
<evidence type="ECO:0000305" key="6">
    <source>
    </source>
</evidence>
<evidence type="ECO:0000305" key="7">
    <source>
    </source>
</evidence>
<protein>
    <recommendedName>
        <fullName>Mitochondrial fission process protein 1</fullName>
    </recommendedName>
    <alternativeName>
        <fullName>Mitochondrial 18 kDa protein</fullName>
        <shortName>MTP18</shortName>
    </alternativeName>
</protein>
<accession>Q9UDX5</accession>
<accession>A6NFQ5</accession>
<accession>Q9H3K1</accession>
<accession>Q9P0N6</accession>
<comment type="function">
    <text evidence="3 4">Involved in the mitochondrial division probably by regulating membrane fission. Loss-of-function induces the release of cytochrome c, which activates the caspase cascade and leads to apoptosis.</text>
</comment>
<comment type="interaction">
    <interactant intactId="EBI-1042890">
        <id>Q9UDX5</id>
    </interactant>
    <interactant intactId="EBI-748974">
        <id>Q96CV9</id>
        <label>OPTN</label>
    </interactant>
    <organismsDiffer>false</organismsDiffer>
    <experiments>3</experiments>
</comment>
<comment type="subcellular location">
    <subcellularLocation>
        <location evidence="6 7">Mitochondrion inner membrane</location>
        <topology evidence="6 7">Multi-pass membrane protein</topology>
    </subcellularLocation>
</comment>
<comment type="alternative products">
    <event type="alternative splicing"/>
    <isoform>
        <id>Q9UDX5-1</id>
        <name>1</name>
        <sequence type="displayed"/>
    </isoform>
    <isoform>
        <id>Q9UDX5-2</id>
        <name>2</name>
        <sequence type="described" ref="VSP_041425"/>
    </isoform>
</comment>
<comment type="induction">
    <text evidence="3">Expression is regulated by the phosphatidylinositol (PI) 3-kinase pathway.</text>
</comment>
<comment type="similarity">
    <text evidence="5">Belongs to the MTFP1 family.</text>
</comment>
<comment type="sequence caution" evidence="5">
    <conflict type="frameshift">
        <sequence resource="EMBL-CDS" id="AAF36162"/>
    </conflict>
</comment>
<comment type="sequence caution" evidence="5">
    <conflict type="frameshift">
        <sequence resource="EMBL-CDS" id="AAG43136"/>
    </conflict>
</comment>
<gene>
    <name type="primary">MTFP1</name>
    <name type="synonym">MTP18</name>
    <name type="ORF">HSPC242</name>
    <name type="ORF">My022</name>
</gene>
<keyword id="KW-0025">Alternative splicing</keyword>
<keyword id="KW-0053">Apoptosis</keyword>
<keyword id="KW-0472">Membrane</keyword>
<keyword id="KW-0496">Mitochondrion</keyword>
<keyword id="KW-0999">Mitochondrion inner membrane</keyword>
<keyword id="KW-1267">Proteomics identification</keyword>
<keyword id="KW-1185">Reference proteome</keyword>
<keyword id="KW-0812">Transmembrane</keyword>
<keyword id="KW-1133">Transmembrane helix</keyword>
<organism>
    <name type="scientific">Homo sapiens</name>
    <name type="common">Human</name>
    <dbReference type="NCBI Taxonomy" id="9606"/>
    <lineage>
        <taxon>Eukaryota</taxon>
        <taxon>Metazoa</taxon>
        <taxon>Chordata</taxon>
        <taxon>Craniata</taxon>
        <taxon>Vertebrata</taxon>
        <taxon>Euteleostomi</taxon>
        <taxon>Mammalia</taxon>
        <taxon>Eutheria</taxon>
        <taxon>Euarchontoglires</taxon>
        <taxon>Primates</taxon>
        <taxon>Haplorrhini</taxon>
        <taxon>Catarrhini</taxon>
        <taxon>Hominidae</taxon>
        <taxon>Homo</taxon>
    </lineage>
</organism>
<name>MTFP1_HUMAN</name>
<proteinExistence type="evidence at protein level"/>
<dbReference type="EMBL" id="AF151076">
    <property type="protein sequence ID" value="AAF36162.1"/>
    <property type="status" value="ALT_SEQ"/>
    <property type="molecule type" value="mRNA"/>
</dbReference>
<dbReference type="EMBL" id="AF060924">
    <property type="protein sequence ID" value="AAG43136.1"/>
    <property type="status" value="ALT_FRAME"/>
    <property type="molecule type" value="mRNA"/>
</dbReference>
<dbReference type="EMBL" id="CR456345">
    <property type="protein sequence ID" value="CAG30231.1"/>
    <property type="molecule type" value="mRNA"/>
</dbReference>
<dbReference type="EMBL" id="AC004832">
    <property type="protein sequence ID" value="AAF19257.1"/>
    <property type="molecule type" value="Genomic_DNA"/>
</dbReference>
<dbReference type="EMBL" id="BC001608">
    <property type="protein sequence ID" value="AAH01608.1"/>
    <property type="molecule type" value="mRNA"/>
</dbReference>
<dbReference type="EMBL" id="BC009300">
    <property type="protein sequence ID" value="AAH09300.1"/>
    <property type="molecule type" value="mRNA"/>
</dbReference>
<dbReference type="EMBL" id="BC014446">
    <property type="protein sequence ID" value="AAH14446.1"/>
    <property type="molecule type" value="mRNA"/>
</dbReference>
<dbReference type="EMBL" id="BC030989">
    <property type="protein sequence ID" value="AAH30989.1"/>
    <property type="molecule type" value="mRNA"/>
</dbReference>
<dbReference type="EMBL" id="BC038831">
    <property type="protein sequence ID" value="AAH38831.1"/>
    <property type="molecule type" value="mRNA"/>
</dbReference>
<dbReference type="EMBL" id="BC046132">
    <property type="protein sequence ID" value="AAH46132.1"/>
    <property type="molecule type" value="mRNA"/>
</dbReference>
<dbReference type="CCDS" id="CCDS33634.1">
    <molecule id="Q9UDX5-2"/>
</dbReference>
<dbReference type="CCDS" id="CCDS33635.1">
    <molecule id="Q9UDX5-1"/>
</dbReference>
<dbReference type="RefSeq" id="NP_001003704.1">
    <molecule id="Q9UDX5-2"/>
    <property type="nucleotide sequence ID" value="NM_001003704.3"/>
</dbReference>
<dbReference type="RefSeq" id="NP_057582.2">
    <molecule id="Q9UDX5-1"/>
    <property type="nucleotide sequence ID" value="NM_016498.5"/>
</dbReference>
<dbReference type="BioGRID" id="119597">
    <property type="interactions" value="36"/>
</dbReference>
<dbReference type="FunCoup" id="Q9UDX5">
    <property type="interactions" value="802"/>
</dbReference>
<dbReference type="IntAct" id="Q9UDX5">
    <property type="interactions" value="31"/>
</dbReference>
<dbReference type="STRING" id="9606.ENSP00000266263"/>
<dbReference type="iPTMnet" id="Q9UDX5"/>
<dbReference type="PhosphoSitePlus" id="Q9UDX5"/>
<dbReference type="SwissPalm" id="Q9UDX5"/>
<dbReference type="BioMuta" id="MTFP1"/>
<dbReference type="DMDM" id="52783151"/>
<dbReference type="jPOST" id="Q9UDX5"/>
<dbReference type="MassIVE" id="Q9UDX5"/>
<dbReference type="PaxDb" id="9606-ENSP00000266263"/>
<dbReference type="PeptideAtlas" id="Q9UDX5"/>
<dbReference type="ProteomicsDB" id="84125">
    <molecule id="Q9UDX5-1"/>
</dbReference>
<dbReference type="ProteomicsDB" id="84126">
    <molecule id="Q9UDX5-2"/>
</dbReference>
<dbReference type="Pumba" id="Q9UDX5"/>
<dbReference type="TopDownProteomics" id="Q9UDX5-1">
    <molecule id="Q9UDX5-1"/>
</dbReference>
<dbReference type="Antibodypedia" id="34826">
    <property type="antibodies" value="104 antibodies from 21 providers"/>
</dbReference>
<dbReference type="DNASU" id="51537"/>
<dbReference type="Ensembl" id="ENST00000266263.10">
    <molecule id="Q9UDX5-1"/>
    <property type="protein sequence ID" value="ENSP00000266263.5"/>
    <property type="gene ID" value="ENSG00000242114.6"/>
</dbReference>
<dbReference type="Ensembl" id="ENST00000355143.8">
    <molecule id="Q9UDX5-2"/>
    <property type="protein sequence ID" value="ENSP00000347267.4"/>
    <property type="gene ID" value="ENSG00000242114.6"/>
</dbReference>
<dbReference type="GeneID" id="51537"/>
<dbReference type="KEGG" id="hsa:51537"/>
<dbReference type="MANE-Select" id="ENST00000266263.10">
    <property type="protein sequence ID" value="ENSP00000266263.5"/>
    <property type="RefSeq nucleotide sequence ID" value="NM_016498.5"/>
    <property type="RefSeq protein sequence ID" value="NP_057582.2"/>
</dbReference>
<dbReference type="UCSC" id="uc003ahw.3">
    <molecule id="Q9UDX5-1"/>
    <property type="organism name" value="human"/>
</dbReference>
<dbReference type="AGR" id="HGNC:26945"/>
<dbReference type="CTD" id="51537"/>
<dbReference type="DisGeNET" id="51537"/>
<dbReference type="GeneCards" id="MTFP1"/>
<dbReference type="HGNC" id="HGNC:26945">
    <property type="gene designation" value="MTFP1"/>
</dbReference>
<dbReference type="HPA" id="ENSG00000242114">
    <property type="expression patterns" value="Low tissue specificity"/>
</dbReference>
<dbReference type="MIM" id="610235">
    <property type="type" value="gene"/>
</dbReference>
<dbReference type="neXtProt" id="NX_Q9UDX5"/>
<dbReference type="OpenTargets" id="ENSG00000242114"/>
<dbReference type="VEuPathDB" id="HostDB:ENSG00000242114"/>
<dbReference type="eggNOG" id="KOG3945">
    <property type="taxonomic scope" value="Eukaryota"/>
</dbReference>
<dbReference type="GeneTree" id="ENSGT00390000004019"/>
<dbReference type="HOGENOM" id="CLU_1885070_0_0_1"/>
<dbReference type="InParanoid" id="Q9UDX5"/>
<dbReference type="OMA" id="DVFTWQM"/>
<dbReference type="OrthoDB" id="424969at2759"/>
<dbReference type="PAN-GO" id="Q9UDX5">
    <property type="GO annotations" value="2 GO annotations based on evolutionary models"/>
</dbReference>
<dbReference type="PhylomeDB" id="Q9UDX5"/>
<dbReference type="TreeFam" id="TF324605"/>
<dbReference type="PathwayCommons" id="Q9UDX5"/>
<dbReference type="SignaLink" id="Q9UDX5"/>
<dbReference type="SIGNOR" id="Q9UDX5"/>
<dbReference type="BioGRID-ORCS" id="51537">
    <property type="hits" value="20 hits in 1161 CRISPR screens"/>
</dbReference>
<dbReference type="GeneWiki" id="MTP18"/>
<dbReference type="GenomeRNAi" id="51537"/>
<dbReference type="Pharos" id="Q9UDX5">
    <property type="development level" value="Tbio"/>
</dbReference>
<dbReference type="PRO" id="PR:Q9UDX5"/>
<dbReference type="Proteomes" id="UP000005640">
    <property type="component" value="Chromosome 22"/>
</dbReference>
<dbReference type="RNAct" id="Q9UDX5">
    <property type="molecule type" value="protein"/>
</dbReference>
<dbReference type="Bgee" id="ENSG00000242114">
    <property type="expression patterns" value="Expressed in mucosa of transverse colon and 95 other cell types or tissues"/>
</dbReference>
<dbReference type="ExpressionAtlas" id="Q9UDX5">
    <property type="expression patterns" value="baseline and differential"/>
</dbReference>
<dbReference type="GO" id="GO:0005743">
    <property type="term" value="C:mitochondrial inner membrane"/>
    <property type="evidence" value="ECO:0000314"/>
    <property type="project" value="UniProtKB"/>
</dbReference>
<dbReference type="GO" id="GO:0005739">
    <property type="term" value="C:mitochondrion"/>
    <property type="evidence" value="ECO:0006056"/>
    <property type="project" value="FlyBase"/>
</dbReference>
<dbReference type="GO" id="GO:0006915">
    <property type="term" value="P:apoptotic process"/>
    <property type="evidence" value="ECO:0007669"/>
    <property type="project" value="UniProtKB-KW"/>
</dbReference>
<dbReference type="GO" id="GO:0000266">
    <property type="term" value="P:mitochondrial fission"/>
    <property type="evidence" value="ECO:0000315"/>
    <property type="project" value="UniProtKB"/>
</dbReference>
<dbReference type="InterPro" id="IPR019560">
    <property type="entry name" value="Mitochondrial_18_kDa_protein"/>
</dbReference>
<dbReference type="PANTHER" id="PTHR11001">
    <property type="entry name" value="MITOCHONDRIAL FISSION PROCESS PROTEIN 1"/>
    <property type="match status" value="1"/>
</dbReference>
<dbReference type="PANTHER" id="PTHR11001:SF2">
    <property type="entry name" value="MITOCHONDRIAL FISSION PROCESS PROTEIN 1"/>
    <property type="match status" value="1"/>
</dbReference>
<dbReference type="Pfam" id="PF10558">
    <property type="entry name" value="MTP18"/>
    <property type="match status" value="2"/>
</dbReference>
<reference key="1">
    <citation type="journal article" date="2000" name="Genome Res.">
        <title>Cloning and functional analysis of cDNAs with open reading frames for 300 previously undefined genes expressed in CD34+ hematopoietic stem/progenitor cells.</title>
        <authorList>
            <person name="Zhang Q.-H."/>
            <person name="Ye M."/>
            <person name="Wu X.-Y."/>
            <person name="Ren S.-X."/>
            <person name="Zhao M."/>
            <person name="Zhao C.-J."/>
            <person name="Fu G."/>
            <person name="Shen Y."/>
            <person name="Fan H.-Y."/>
            <person name="Lu G."/>
            <person name="Zhong M."/>
            <person name="Xu X.-R."/>
            <person name="Han Z.-G."/>
            <person name="Zhang J.-W."/>
            <person name="Tao J."/>
            <person name="Huang Q.-H."/>
            <person name="Zhou J."/>
            <person name="Hu G.-X."/>
            <person name="Gu J."/>
            <person name="Chen S.-J."/>
            <person name="Chen Z."/>
        </authorList>
    </citation>
    <scope>NUCLEOTIDE SEQUENCE [LARGE SCALE MRNA] (ISOFORM 1)</scope>
    <source>
        <tissue>Umbilical cord blood</tissue>
    </source>
</reference>
<reference key="2">
    <citation type="submission" date="1998-04" db="EMBL/GenBank/DDBJ databases">
        <authorList>
            <person name="Mao Y.M."/>
            <person name="Xie Y."/>
            <person name="Lin Q."/>
            <person name="Mu Z.M."/>
            <person name="Yuan Y.Z."/>
        </authorList>
    </citation>
    <scope>NUCLEOTIDE SEQUENCE [LARGE SCALE MRNA] (ISOFORM 1)</scope>
    <source>
        <tissue>Fetal brain</tissue>
    </source>
</reference>
<reference key="3">
    <citation type="journal article" date="2004" name="Genome Biol.">
        <title>A genome annotation-driven approach to cloning the human ORFeome.</title>
        <authorList>
            <person name="Collins J.E."/>
            <person name="Wright C.L."/>
            <person name="Edwards C.A."/>
            <person name="Davis M.P."/>
            <person name="Grinham J.A."/>
            <person name="Cole C.G."/>
            <person name="Goward M.E."/>
            <person name="Aguado B."/>
            <person name="Mallya M."/>
            <person name="Mokrab Y."/>
            <person name="Huckle E.J."/>
            <person name="Beare D.M."/>
            <person name="Dunham I."/>
        </authorList>
    </citation>
    <scope>NUCLEOTIDE SEQUENCE [LARGE SCALE MRNA] (ISOFORM 1)</scope>
</reference>
<reference key="4">
    <citation type="journal article" date="1999" name="Nature">
        <title>The DNA sequence of human chromosome 22.</title>
        <authorList>
            <person name="Dunham I."/>
            <person name="Hunt A.R."/>
            <person name="Collins J.E."/>
            <person name="Bruskiewich R."/>
            <person name="Beare D.M."/>
            <person name="Clamp M."/>
            <person name="Smink L.J."/>
            <person name="Ainscough R."/>
            <person name="Almeida J.P."/>
            <person name="Babbage A.K."/>
            <person name="Bagguley C."/>
            <person name="Bailey J."/>
            <person name="Barlow K.F."/>
            <person name="Bates K.N."/>
            <person name="Beasley O.P."/>
            <person name="Bird C.P."/>
            <person name="Blakey S.E."/>
            <person name="Bridgeman A.M."/>
            <person name="Buck D."/>
            <person name="Burgess J."/>
            <person name="Burrill W.D."/>
            <person name="Burton J."/>
            <person name="Carder C."/>
            <person name="Carter N.P."/>
            <person name="Chen Y."/>
            <person name="Clark G."/>
            <person name="Clegg S.M."/>
            <person name="Cobley V.E."/>
            <person name="Cole C.G."/>
            <person name="Collier R.E."/>
            <person name="Connor R."/>
            <person name="Conroy D."/>
            <person name="Corby N.R."/>
            <person name="Coville G.J."/>
            <person name="Cox A.V."/>
            <person name="Davis J."/>
            <person name="Dawson E."/>
            <person name="Dhami P.D."/>
            <person name="Dockree C."/>
            <person name="Dodsworth S.J."/>
            <person name="Durbin R.M."/>
            <person name="Ellington A.G."/>
            <person name="Evans K.L."/>
            <person name="Fey J.M."/>
            <person name="Fleming K."/>
            <person name="French L."/>
            <person name="Garner A.A."/>
            <person name="Gilbert J.G.R."/>
            <person name="Goward M.E."/>
            <person name="Grafham D.V."/>
            <person name="Griffiths M.N.D."/>
            <person name="Hall C."/>
            <person name="Hall R.E."/>
            <person name="Hall-Tamlyn G."/>
            <person name="Heathcott R.W."/>
            <person name="Ho S."/>
            <person name="Holmes S."/>
            <person name="Hunt S.E."/>
            <person name="Jones M.C."/>
            <person name="Kershaw J."/>
            <person name="Kimberley A.M."/>
            <person name="King A."/>
            <person name="Laird G.K."/>
            <person name="Langford C.F."/>
            <person name="Leversha M.A."/>
            <person name="Lloyd C."/>
            <person name="Lloyd D.M."/>
            <person name="Martyn I.D."/>
            <person name="Mashreghi-Mohammadi M."/>
            <person name="Matthews L.H."/>
            <person name="Mccann O.T."/>
            <person name="Mcclay J."/>
            <person name="Mclaren S."/>
            <person name="McMurray A.A."/>
            <person name="Milne S.A."/>
            <person name="Mortimore B.J."/>
            <person name="Odell C.N."/>
            <person name="Pavitt R."/>
            <person name="Pearce A.V."/>
            <person name="Pearson D."/>
            <person name="Phillimore B.J.C.T."/>
            <person name="Phillips S.H."/>
            <person name="Plumb R.W."/>
            <person name="Ramsay H."/>
            <person name="Ramsey Y."/>
            <person name="Rogers L."/>
            <person name="Ross M.T."/>
            <person name="Scott C.E."/>
            <person name="Sehra H.K."/>
            <person name="Skuce C.D."/>
            <person name="Smalley S."/>
            <person name="Smith M.L."/>
            <person name="Soderlund C."/>
            <person name="Spragon L."/>
            <person name="Steward C.A."/>
            <person name="Sulston J.E."/>
            <person name="Swann R.M."/>
            <person name="Vaudin M."/>
            <person name="Wall M."/>
            <person name="Wallis J.M."/>
            <person name="Whiteley M.N."/>
            <person name="Willey D.L."/>
            <person name="Williams L."/>
            <person name="Williams S.A."/>
            <person name="Williamson H."/>
            <person name="Wilmer T.E."/>
            <person name="Wilming L."/>
            <person name="Wright C.L."/>
            <person name="Hubbard T."/>
            <person name="Bentley D.R."/>
            <person name="Beck S."/>
            <person name="Rogers J."/>
            <person name="Shimizu N."/>
            <person name="Minoshima S."/>
            <person name="Kawasaki K."/>
            <person name="Sasaki T."/>
            <person name="Asakawa S."/>
            <person name="Kudoh J."/>
            <person name="Shintani A."/>
            <person name="Shibuya K."/>
            <person name="Yoshizaki Y."/>
            <person name="Aoki N."/>
            <person name="Mitsuyama S."/>
            <person name="Roe B.A."/>
            <person name="Chen F."/>
            <person name="Chu L."/>
            <person name="Crabtree J."/>
            <person name="Deschamps S."/>
            <person name="Do A."/>
            <person name="Do T."/>
            <person name="Dorman A."/>
            <person name="Fang F."/>
            <person name="Fu Y."/>
            <person name="Hu P."/>
            <person name="Hua A."/>
            <person name="Kenton S."/>
            <person name="Lai H."/>
            <person name="Lao H.I."/>
            <person name="Lewis J."/>
            <person name="Lewis S."/>
            <person name="Lin S.-P."/>
            <person name="Loh P."/>
            <person name="Malaj E."/>
            <person name="Nguyen T."/>
            <person name="Pan H."/>
            <person name="Phan S."/>
            <person name="Qi S."/>
            <person name="Qian Y."/>
            <person name="Ray L."/>
            <person name="Ren Q."/>
            <person name="Shaull S."/>
            <person name="Sloan D."/>
            <person name="Song L."/>
            <person name="Wang Q."/>
            <person name="Wang Y."/>
            <person name="Wang Z."/>
            <person name="White J."/>
            <person name="Willingham D."/>
            <person name="Wu H."/>
            <person name="Yao Z."/>
            <person name="Zhan M."/>
            <person name="Zhang G."/>
            <person name="Chissoe S."/>
            <person name="Murray J."/>
            <person name="Miller N."/>
            <person name="Minx P."/>
            <person name="Fulton R."/>
            <person name="Johnson D."/>
            <person name="Bemis G."/>
            <person name="Bentley D."/>
            <person name="Bradshaw H."/>
            <person name="Bourne S."/>
            <person name="Cordes M."/>
            <person name="Du Z."/>
            <person name="Fulton L."/>
            <person name="Goela D."/>
            <person name="Graves T."/>
            <person name="Hawkins J."/>
            <person name="Hinds K."/>
            <person name="Kemp K."/>
            <person name="Latreille P."/>
            <person name="Layman D."/>
            <person name="Ozersky P."/>
            <person name="Rohlfing T."/>
            <person name="Scheet P."/>
            <person name="Walker C."/>
            <person name="Wamsley A."/>
            <person name="Wohldmann P."/>
            <person name="Pepin K."/>
            <person name="Nelson J."/>
            <person name="Korf I."/>
            <person name="Bedell J.A."/>
            <person name="Hillier L.W."/>
            <person name="Mardis E."/>
            <person name="Waterston R."/>
            <person name="Wilson R."/>
            <person name="Emanuel B.S."/>
            <person name="Shaikh T."/>
            <person name="Kurahashi H."/>
            <person name="Saitta S."/>
            <person name="Budarf M.L."/>
            <person name="McDermid H.E."/>
            <person name="Johnson A."/>
            <person name="Wong A.C.C."/>
            <person name="Morrow B.E."/>
            <person name="Edelmann L."/>
            <person name="Kim U.J."/>
            <person name="Shizuya H."/>
            <person name="Simon M.I."/>
            <person name="Dumanski J.P."/>
            <person name="Peyrard M."/>
            <person name="Kedra D."/>
            <person name="Seroussi E."/>
            <person name="Fransson I."/>
            <person name="Tapia I."/>
            <person name="Bruder C.E."/>
            <person name="O'Brien K.P."/>
            <person name="Wilkinson P."/>
            <person name="Bodenteich A."/>
            <person name="Hartman K."/>
            <person name="Hu X."/>
            <person name="Khan A.S."/>
            <person name="Lane L."/>
            <person name="Tilahun Y."/>
            <person name="Wright H."/>
        </authorList>
    </citation>
    <scope>NUCLEOTIDE SEQUENCE [LARGE SCALE GENOMIC DNA]</scope>
</reference>
<reference key="5">
    <citation type="journal article" date="2004" name="Genome Res.">
        <title>The status, quality, and expansion of the NIH full-length cDNA project: the Mammalian Gene Collection (MGC).</title>
        <authorList>
            <consortium name="The MGC Project Team"/>
        </authorList>
    </citation>
    <scope>NUCLEOTIDE SEQUENCE [LARGE SCALE MRNA] (ISOFORM 1)</scope>
    <source>
        <tissue>B-cell</tissue>
        <tissue>Bone marrow</tissue>
        <tissue>Brain</tissue>
        <tissue>Liver</tissue>
        <tissue>Lymph</tissue>
        <tissue>Uterus</tissue>
    </source>
</reference>
<reference key="6">
    <citation type="journal article" date="2004" name="J. Biol. Chem.">
        <title>Knockdown of MTP18, a novel phosphatidylinositol 3-kinase-dependent protein, affects mitochondrial morphology and induces apoptosis.</title>
        <authorList>
            <person name="Tondera D."/>
            <person name="Santel A."/>
            <person name="Schwarzer R."/>
            <person name="Dames S."/>
            <person name="Giese K."/>
            <person name="Klippel A."/>
            <person name="Kaufmann J."/>
        </authorList>
    </citation>
    <scope>SUBCELLULAR LOCATION</scope>
    <scope>FUNCTION</scope>
    <scope>INDUCTION</scope>
</reference>
<reference key="7">
    <citation type="journal article" date="2005" name="J. Cell Sci.">
        <title>The mitochondrial protein MTP18 contributes to mitochondrial fission in mammalian cells.</title>
        <authorList>
            <person name="Tondera D."/>
            <person name="Czauderna F."/>
            <person name="Paulick K."/>
            <person name="Schwarzer R."/>
            <person name="Kaufmann J."/>
            <person name="Santel A."/>
        </authorList>
    </citation>
    <scope>FUNCTION</scope>
    <scope>SUBCELLULAR LOCATION</scope>
</reference>
<reference key="8">
    <citation type="journal article" date="2011" name="BMC Syst. Biol.">
        <title>Initial characterization of the human central proteome.</title>
        <authorList>
            <person name="Burkard T.R."/>
            <person name="Planyavsky M."/>
            <person name="Kaupe I."/>
            <person name="Breitwieser F.P."/>
            <person name="Buerckstuemmer T."/>
            <person name="Bennett K.L."/>
            <person name="Superti-Furga G."/>
            <person name="Colinge J."/>
        </authorList>
    </citation>
    <scope>IDENTIFICATION BY MASS SPECTROMETRY [LARGE SCALE ANALYSIS]</scope>
</reference>
<reference key="9">
    <citation type="journal article" date="2015" name="Proteomics">
        <title>N-terminome analysis of the human mitochondrial proteome.</title>
        <authorList>
            <person name="Vaca Jacome A.S."/>
            <person name="Rabilloud T."/>
            <person name="Schaeffer-Reiss C."/>
            <person name="Rompais M."/>
            <person name="Ayoub D."/>
            <person name="Lane L."/>
            <person name="Bairoch A."/>
            <person name="Van Dorsselaer A."/>
            <person name="Carapito C."/>
        </authorList>
    </citation>
    <scope>IDENTIFICATION BY MASS SPECTROMETRY [LARGE SCALE ANALYSIS]</scope>
</reference>